<protein>
    <recommendedName>
        <fullName evidence="1">3-deoxy-manno-octulosonate cytidylyltransferase</fullName>
        <ecNumber evidence="1">2.7.7.38</ecNumber>
    </recommendedName>
    <alternativeName>
        <fullName evidence="1">CMP-2-keto-3-deoxyoctulosonic acid synthase</fullName>
        <shortName evidence="1">CKS</shortName>
        <shortName evidence="1">CMP-KDO synthase</shortName>
    </alternativeName>
</protein>
<comment type="function">
    <text evidence="1">Activates KDO (a required 8-carbon sugar) for incorporation into bacterial lipopolysaccharide in Gram-negative bacteria.</text>
</comment>
<comment type="catalytic activity">
    <reaction evidence="1">
        <text>3-deoxy-alpha-D-manno-oct-2-ulosonate + CTP = CMP-3-deoxy-beta-D-manno-octulosonate + diphosphate</text>
        <dbReference type="Rhea" id="RHEA:23448"/>
        <dbReference type="ChEBI" id="CHEBI:33019"/>
        <dbReference type="ChEBI" id="CHEBI:37563"/>
        <dbReference type="ChEBI" id="CHEBI:85986"/>
        <dbReference type="ChEBI" id="CHEBI:85987"/>
        <dbReference type="EC" id="2.7.7.38"/>
    </reaction>
</comment>
<comment type="pathway">
    <text evidence="1">Nucleotide-sugar biosynthesis; CMP-3-deoxy-D-manno-octulosonate biosynthesis; CMP-3-deoxy-D-manno-octulosonate from 3-deoxy-D-manno-octulosonate and CTP: step 1/1.</text>
</comment>
<comment type="pathway">
    <text evidence="1">Bacterial outer membrane biogenesis; lipopolysaccharide biosynthesis.</text>
</comment>
<comment type="subcellular location">
    <subcellularLocation>
        <location evidence="1">Cytoplasm</location>
    </subcellularLocation>
</comment>
<comment type="similarity">
    <text evidence="1">Belongs to the KdsB family.</text>
</comment>
<accession>Q2NUA2</accession>
<feature type="chain" id="PRO_1000003386" description="3-deoxy-manno-octulosonate cytidylyltransferase">
    <location>
        <begin position="1"/>
        <end position="251"/>
    </location>
</feature>
<gene>
    <name evidence="1" type="primary">kdsB</name>
    <name type="ordered locus">SG0998</name>
</gene>
<proteinExistence type="inferred from homology"/>
<keyword id="KW-0963">Cytoplasm</keyword>
<keyword id="KW-0448">Lipopolysaccharide biosynthesis</keyword>
<keyword id="KW-0548">Nucleotidyltransferase</keyword>
<keyword id="KW-0808">Transferase</keyword>
<dbReference type="EC" id="2.7.7.38" evidence="1"/>
<dbReference type="EMBL" id="AP008232">
    <property type="protein sequence ID" value="BAE74273.1"/>
    <property type="molecule type" value="Genomic_DNA"/>
</dbReference>
<dbReference type="RefSeq" id="WP_011410859.1">
    <property type="nucleotide sequence ID" value="NC_007712.1"/>
</dbReference>
<dbReference type="SMR" id="Q2NUA2"/>
<dbReference type="STRING" id="343509.SG0998"/>
<dbReference type="KEGG" id="sgl:SG0998"/>
<dbReference type="eggNOG" id="COG1212">
    <property type="taxonomic scope" value="Bacteria"/>
</dbReference>
<dbReference type="HOGENOM" id="CLU_065038_1_0_6"/>
<dbReference type="OrthoDB" id="9815559at2"/>
<dbReference type="BioCyc" id="SGLO343509:SGP1_RS08530-MONOMER"/>
<dbReference type="UniPathway" id="UPA00030"/>
<dbReference type="UniPathway" id="UPA00358">
    <property type="reaction ID" value="UER00476"/>
</dbReference>
<dbReference type="Proteomes" id="UP000001932">
    <property type="component" value="Chromosome"/>
</dbReference>
<dbReference type="GO" id="GO:0005829">
    <property type="term" value="C:cytosol"/>
    <property type="evidence" value="ECO:0007669"/>
    <property type="project" value="TreeGrafter"/>
</dbReference>
<dbReference type="GO" id="GO:0008690">
    <property type="term" value="F:3-deoxy-manno-octulosonate cytidylyltransferase activity"/>
    <property type="evidence" value="ECO:0007669"/>
    <property type="project" value="UniProtKB-UniRule"/>
</dbReference>
<dbReference type="GO" id="GO:0033468">
    <property type="term" value="P:CMP-keto-3-deoxy-D-manno-octulosonic acid biosynthetic process"/>
    <property type="evidence" value="ECO:0007669"/>
    <property type="project" value="UniProtKB-UniRule"/>
</dbReference>
<dbReference type="GO" id="GO:0009103">
    <property type="term" value="P:lipopolysaccharide biosynthetic process"/>
    <property type="evidence" value="ECO:0007669"/>
    <property type="project" value="UniProtKB-UniRule"/>
</dbReference>
<dbReference type="CDD" id="cd02517">
    <property type="entry name" value="CMP-KDO-Synthetase"/>
    <property type="match status" value="1"/>
</dbReference>
<dbReference type="FunFam" id="3.90.550.10:FF:000011">
    <property type="entry name" value="3-deoxy-manno-octulosonate cytidylyltransferase"/>
    <property type="match status" value="1"/>
</dbReference>
<dbReference type="Gene3D" id="3.90.550.10">
    <property type="entry name" value="Spore Coat Polysaccharide Biosynthesis Protein SpsA, Chain A"/>
    <property type="match status" value="1"/>
</dbReference>
<dbReference type="HAMAP" id="MF_00057">
    <property type="entry name" value="KdsB"/>
    <property type="match status" value="1"/>
</dbReference>
<dbReference type="InterPro" id="IPR003329">
    <property type="entry name" value="Cytidylyl_trans"/>
</dbReference>
<dbReference type="InterPro" id="IPR004528">
    <property type="entry name" value="KdsB"/>
</dbReference>
<dbReference type="InterPro" id="IPR029044">
    <property type="entry name" value="Nucleotide-diphossugar_trans"/>
</dbReference>
<dbReference type="NCBIfam" id="TIGR00466">
    <property type="entry name" value="kdsB"/>
    <property type="match status" value="1"/>
</dbReference>
<dbReference type="NCBIfam" id="NF003950">
    <property type="entry name" value="PRK05450.1-3"/>
    <property type="match status" value="1"/>
</dbReference>
<dbReference type="NCBIfam" id="NF003952">
    <property type="entry name" value="PRK05450.1-5"/>
    <property type="match status" value="1"/>
</dbReference>
<dbReference type="NCBIfam" id="NF009905">
    <property type="entry name" value="PRK13368.1"/>
    <property type="match status" value="1"/>
</dbReference>
<dbReference type="PANTHER" id="PTHR42866">
    <property type="entry name" value="3-DEOXY-MANNO-OCTULOSONATE CYTIDYLYLTRANSFERASE"/>
    <property type="match status" value="1"/>
</dbReference>
<dbReference type="PANTHER" id="PTHR42866:SF2">
    <property type="entry name" value="3-DEOXY-MANNO-OCTULOSONATE CYTIDYLYLTRANSFERASE, MITOCHONDRIAL"/>
    <property type="match status" value="1"/>
</dbReference>
<dbReference type="Pfam" id="PF02348">
    <property type="entry name" value="CTP_transf_3"/>
    <property type="match status" value="1"/>
</dbReference>
<dbReference type="SUPFAM" id="SSF53448">
    <property type="entry name" value="Nucleotide-diphospho-sugar transferases"/>
    <property type="match status" value="1"/>
</dbReference>
<organism>
    <name type="scientific">Sodalis glossinidius (strain morsitans)</name>
    <dbReference type="NCBI Taxonomy" id="343509"/>
    <lineage>
        <taxon>Bacteria</taxon>
        <taxon>Pseudomonadati</taxon>
        <taxon>Pseudomonadota</taxon>
        <taxon>Gammaproteobacteria</taxon>
        <taxon>Enterobacterales</taxon>
        <taxon>Bruguierivoracaceae</taxon>
        <taxon>Sodalis</taxon>
    </lineage>
</organism>
<sequence length="251" mass="27821">MSFIAIIPARFASSRLPGKPLADINGKPMVVRVMERAQASGADRVIVATDHQGVVEAVERAGGEVYLTRPDHQSGTERLQEVIDRYDFPDDRIIVNVQGDEPLIPPQIILQVADNLAGAEAGMATLAVPITTAEEAFNPNAVKVVVDARGYALYFSRATIPWDREGFARSREHLSHSLLRHIGIYAYRADFIRRYVSWSASPLEKIEILEQLRVLWYGEKIHVAVSSVAPGMGVDTPEELAQVRLLQQQLD</sequence>
<reference key="1">
    <citation type="journal article" date="2006" name="Genome Res.">
        <title>Massive genome erosion and functional adaptations provide insights into the symbiotic lifestyle of Sodalis glossinidius in the tsetse host.</title>
        <authorList>
            <person name="Toh H."/>
            <person name="Weiss B.L."/>
            <person name="Perkin S.A.H."/>
            <person name="Yamashita A."/>
            <person name="Oshima K."/>
            <person name="Hattori M."/>
            <person name="Aksoy S."/>
        </authorList>
    </citation>
    <scope>NUCLEOTIDE SEQUENCE [LARGE SCALE GENOMIC DNA]</scope>
    <source>
        <strain>morsitans</strain>
    </source>
</reference>
<evidence type="ECO:0000255" key="1">
    <source>
        <dbReference type="HAMAP-Rule" id="MF_00057"/>
    </source>
</evidence>
<name>KDSB_SODGM</name>